<accession>Q8D8G5</accession>
<name>PLSX_VIBVU</name>
<gene>
    <name evidence="1" type="primary">plsX</name>
    <name type="ordered locus">VV1_3012</name>
</gene>
<protein>
    <recommendedName>
        <fullName evidence="1">Phosphate acyltransferase</fullName>
        <ecNumber evidence="1">2.3.1.274</ecNumber>
    </recommendedName>
    <alternativeName>
        <fullName evidence="1">Acyl-ACP phosphotransacylase</fullName>
    </alternativeName>
    <alternativeName>
        <fullName evidence="1">Acyl-[acyl-carrier-protein]--phosphate acyltransferase</fullName>
    </alternativeName>
    <alternativeName>
        <fullName evidence="1">Phosphate-acyl-ACP acyltransferase</fullName>
    </alternativeName>
</protein>
<evidence type="ECO:0000255" key="1">
    <source>
        <dbReference type="HAMAP-Rule" id="MF_00019"/>
    </source>
</evidence>
<reference key="1">
    <citation type="submission" date="2002-12" db="EMBL/GenBank/DDBJ databases">
        <title>Complete genome sequence of Vibrio vulnificus CMCP6.</title>
        <authorList>
            <person name="Rhee J.H."/>
            <person name="Kim S.Y."/>
            <person name="Chung S.S."/>
            <person name="Kim J.J."/>
            <person name="Moon Y.H."/>
            <person name="Jeong H."/>
            <person name="Choy H.E."/>
        </authorList>
    </citation>
    <scope>NUCLEOTIDE SEQUENCE [LARGE SCALE GENOMIC DNA]</scope>
    <source>
        <strain>CMCP6</strain>
    </source>
</reference>
<organism>
    <name type="scientific">Vibrio vulnificus (strain CMCP6)</name>
    <dbReference type="NCBI Taxonomy" id="216895"/>
    <lineage>
        <taxon>Bacteria</taxon>
        <taxon>Pseudomonadati</taxon>
        <taxon>Pseudomonadota</taxon>
        <taxon>Gammaproteobacteria</taxon>
        <taxon>Vibrionales</taxon>
        <taxon>Vibrionaceae</taxon>
        <taxon>Vibrio</taxon>
    </lineage>
</organism>
<dbReference type="EC" id="2.3.1.274" evidence="1"/>
<dbReference type="EMBL" id="AE016795">
    <property type="protein sequence ID" value="AAO11339.2"/>
    <property type="molecule type" value="Genomic_DNA"/>
</dbReference>
<dbReference type="RefSeq" id="WP_011080822.1">
    <property type="nucleotide sequence ID" value="NC_004459.3"/>
</dbReference>
<dbReference type="SMR" id="Q8D8G5"/>
<dbReference type="GeneID" id="93894222"/>
<dbReference type="KEGG" id="vvu:VV1_3012"/>
<dbReference type="HOGENOM" id="CLU_039379_1_0_6"/>
<dbReference type="UniPathway" id="UPA00085"/>
<dbReference type="Proteomes" id="UP000002275">
    <property type="component" value="Chromosome 1"/>
</dbReference>
<dbReference type="GO" id="GO:0005737">
    <property type="term" value="C:cytoplasm"/>
    <property type="evidence" value="ECO:0007669"/>
    <property type="project" value="UniProtKB-SubCell"/>
</dbReference>
<dbReference type="GO" id="GO:0043811">
    <property type="term" value="F:phosphate:acyl-[acyl carrier protein] acyltransferase activity"/>
    <property type="evidence" value="ECO:0007669"/>
    <property type="project" value="UniProtKB-UniRule"/>
</dbReference>
<dbReference type="GO" id="GO:0006633">
    <property type="term" value="P:fatty acid biosynthetic process"/>
    <property type="evidence" value="ECO:0007669"/>
    <property type="project" value="UniProtKB-UniRule"/>
</dbReference>
<dbReference type="GO" id="GO:0008654">
    <property type="term" value="P:phospholipid biosynthetic process"/>
    <property type="evidence" value="ECO:0007669"/>
    <property type="project" value="UniProtKB-KW"/>
</dbReference>
<dbReference type="Gene3D" id="3.40.718.10">
    <property type="entry name" value="Isopropylmalate Dehydrogenase"/>
    <property type="match status" value="1"/>
</dbReference>
<dbReference type="HAMAP" id="MF_00019">
    <property type="entry name" value="PlsX"/>
    <property type="match status" value="1"/>
</dbReference>
<dbReference type="InterPro" id="IPR003664">
    <property type="entry name" value="FA_synthesis"/>
</dbReference>
<dbReference type="InterPro" id="IPR012281">
    <property type="entry name" value="Phospholipid_synth_PlsX-like"/>
</dbReference>
<dbReference type="NCBIfam" id="TIGR00182">
    <property type="entry name" value="plsX"/>
    <property type="match status" value="1"/>
</dbReference>
<dbReference type="PANTHER" id="PTHR30100">
    <property type="entry name" value="FATTY ACID/PHOSPHOLIPID SYNTHESIS PROTEIN PLSX"/>
    <property type="match status" value="1"/>
</dbReference>
<dbReference type="PANTHER" id="PTHR30100:SF1">
    <property type="entry name" value="PHOSPHATE ACYLTRANSFERASE"/>
    <property type="match status" value="1"/>
</dbReference>
<dbReference type="Pfam" id="PF02504">
    <property type="entry name" value="FA_synthesis"/>
    <property type="match status" value="1"/>
</dbReference>
<dbReference type="PIRSF" id="PIRSF002465">
    <property type="entry name" value="Phsphlp_syn_PlsX"/>
    <property type="match status" value="1"/>
</dbReference>
<dbReference type="SUPFAM" id="SSF53659">
    <property type="entry name" value="Isocitrate/Isopropylmalate dehydrogenase-like"/>
    <property type="match status" value="1"/>
</dbReference>
<proteinExistence type="inferred from homology"/>
<keyword id="KW-0963">Cytoplasm</keyword>
<keyword id="KW-0444">Lipid biosynthesis</keyword>
<keyword id="KW-0443">Lipid metabolism</keyword>
<keyword id="KW-0594">Phospholipid biosynthesis</keyword>
<keyword id="KW-1208">Phospholipid metabolism</keyword>
<keyword id="KW-0808">Transferase</keyword>
<comment type="function">
    <text evidence="1">Catalyzes the reversible formation of acyl-phosphate (acyl-PO(4)) from acyl-[acyl-carrier-protein] (acyl-ACP). This enzyme utilizes acyl-ACP as fatty acyl donor, but not acyl-CoA.</text>
</comment>
<comment type="catalytic activity">
    <reaction evidence="1">
        <text>a fatty acyl-[ACP] + phosphate = an acyl phosphate + holo-[ACP]</text>
        <dbReference type="Rhea" id="RHEA:42292"/>
        <dbReference type="Rhea" id="RHEA-COMP:9685"/>
        <dbReference type="Rhea" id="RHEA-COMP:14125"/>
        <dbReference type="ChEBI" id="CHEBI:43474"/>
        <dbReference type="ChEBI" id="CHEBI:59918"/>
        <dbReference type="ChEBI" id="CHEBI:64479"/>
        <dbReference type="ChEBI" id="CHEBI:138651"/>
        <dbReference type="EC" id="2.3.1.274"/>
    </reaction>
</comment>
<comment type="pathway">
    <text evidence="1">Lipid metabolism; phospholipid metabolism.</text>
</comment>
<comment type="subunit">
    <text evidence="1">Homodimer. Probably interacts with PlsY.</text>
</comment>
<comment type="subcellular location">
    <subcellularLocation>
        <location evidence="1">Cytoplasm</location>
    </subcellularLocation>
    <text evidence="1">Associated with the membrane possibly through PlsY.</text>
</comment>
<comment type="similarity">
    <text evidence="1">Belongs to the PlsX family.</text>
</comment>
<sequence length="341" mass="36535">MQSITVALDAMGGDFGPRVTVPAAVQALSHFPELKVILTGDQQQITSQLSLLGYKPDARLSVQHCDRMISNSEKPSLALRNSQGSSMRHAIELVADSTADACVSGGNTGALMALSRFILKLLPGIDRPALISALPTVTGGRSWMLDLGANVSCDADTLFQFAVMGSALAEEHLNRAPRVAVLNVGEEETKGNDLVKRCAELLSQTQAVHFVGYIEGNQILKNAADVIVCDGFVGNVCLKASEGTAQLFIEKIKTSMMASSIKGWIARILFSELFNELKTLNPDQYNGASLLGLRGIVIKSHGSADVSALVNAIGEAVHEVKRQVPSRISDRLEAVLLERHY</sequence>
<feature type="chain" id="PRO_0000189965" description="Phosphate acyltransferase">
    <location>
        <begin position="1"/>
        <end position="341"/>
    </location>
</feature>